<name>LEUD_SHEWM</name>
<dbReference type="EC" id="4.2.1.33" evidence="1"/>
<dbReference type="EMBL" id="CP000961">
    <property type="protein sequence ID" value="ACA88797.1"/>
    <property type="molecule type" value="Genomic_DNA"/>
</dbReference>
<dbReference type="RefSeq" id="WP_012327123.1">
    <property type="nucleotide sequence ID" value="NC_010506.1"/>
</dbReference>
<dbReference type="SMR" id="B1KKZ1"/>
<dbReference type="STRING" id="392500.Swoo_4547"/>
<dbReference type="KEGG" id="swd:Swoo_4547"/>
<dbReference type="eggNOG" id="COG0066">
    <property type="taxonomic scope" value="Bacteria"/>
</dbReference>
<dbReference type="HOGENOM" id="CLU_081378_0_3_6"/>
<dbReference type="UniPathway" id="UPA00048">
    <property type="reaction ID" value="UER00071"/>
</dbReference>
<dbReference type="Proteomes" id="UP000002168">
    <property type="component" value="Chromosome"/>
</dbReference>
<dbReference type="GO" id="GO:0009316">
    <property type="term" value="C:3-isopropylmalate dehydratase complex"/>
    <property type="evidence" value="ECO:0007669"/>
    <property type="project" value="InterPro"/>
</dbReference>
<dbReference type="GO" id="GO:0003861">
    <property type="term" value="F:3-isopropylmalate dehydratase activity"/>
    <property type="evidence" value="ECO:0007669"/>
    <property type="project" value="UniProtKB-UniRule"/>
</dbReference>
<dbReference type="GO" id="GO:0009098">
    <property type="term" value="P:L-leucine biosynthetic process"/>
    <property type="evidence" value="ECO:0007669"/>
    <property type="project" value="UniProtKB-UniRule"/>
</dbReference>
<dbReference type="CDD" id="cd01577">
    <property type="entry name" value="IPMI_Swivel"/>
    <property type="match status" value="1"/>
</dbReference>
<dbReference type="FunFam" id="3.20.19.10:FF:000003">
    <property type="entry name" value="3-isopropylmalate dehydratase small subunit"/>
    <property type="match status" value="1"/>
</dbReference>
<dbReference type="Gene3D" id="3.20.19.10">
    <property type="entry name" value="Aconitase, domain 4"/>
    <property type="match status" value="1"/>
</dbReference>
<dbReference type="HAMAP" id="MF_01031">
    <property type="entry name" value="LeuD_type1"/>
    <property type="match status" value="1"/>
</dbReference>
<dbReference type="InterPro" id="IPR004431">
    <property type="entry name" value="3-IsopropMal_deHydase_ssu"/>
</dbReference>
<dbReference type="InterPro" id="IPR015928">
    <property type="entry name" value="Aconitase/3IPM_dehydase_swvl"/>
</dbReference>
<dbReference type="InterPro" id="IPR000573">
    <property type="entry name" value="AconitaseA/IPMdHydase_ssu_swvl"/>
</dbReference>
<dbReference type="InterPro" id="IPR033940">
    <property type="entry name" value="IPMI_Swivel"/>
</dbReference>
<dbReference type="InterPro" id="IPR050075">
    <property type="entry name" value="LeuD"/>
</dbReference>
<dbReference type="NCBIfam" id="TIGR00171">
    <property type="entry name" value="leuD"/>
    <property type="match status" value="1"/>
</dbReference>
<dbReference type="NCBIfam" id="NF002458">
    <property type="entry name" value="PRK01641.1"/>
    <property type="match status" value="1"/>
</dbReference>
<dbReference type="PANTHER" id="PTHR43345:SF5">
    <property type="entry name" value="3-ISOPROPYLMALATE DEHYDRATASE SMALL SUBUNIT"/>
    <property type="match status" value="1"/>
</dbReference>
<dbReference type="PANTHER" id="PTHR43345">
    <property type="entry name" value="3-ISOPROPYLMALATE DEHYDRATASE SMALL SUBUNIT 2-RELATED-RELATED"/>
    <property type="match status" value="1"/>
</dbReference>
<dbReference type="Pfam" id="PF00694">
    <property type="entry name" value="Aconitase_C"/>
    <property type="match status" value="1"/>
</dbReference>
<dbReference type="SUPFAM" id="SSF52016">
    <property type="entry name" value="LeuD/IlvD-like"/>
    <property type="match status" value="1"/>
</dbReference>
<accession>B1KKZ1</accession>
<proteinExistence type="inferred from homology"/>
<gene>
    <name evidence="1" type="primary">leuD</name>
    <name type="ordered locus">Swoo_4547</name>
</gene>
<comment type="function">
    <text evidence="1">Catalyzes the isomerization between 2-isopropylmalate and 3-isopropylmalate, via the formation of 2-isopropylmaleate.</text>
</comment>
<comment type="catalytic activity">
    <reaction evidence="1">
        <text>(2R,3S)-3-isopropylmalate = (2S)-2-isopropylmalate</text>
        <dbReference type="Rhea" id="RHEA:32287"/>
        <dbReference type="ChEBI" id="CHEBI:1178"/>
        <dbReference type="ChEBI" id="CHEBI:35121"/>
        <dbReference type="EC" id="4.2.1.33"/>
    </reaction>
</comment>
<comment type="pathway">
    <text evidence="1">Amino-acid biosynthesis; L-leucine biosynthesis; L-leucine from 3-methyl-2-oxobutanoate: step 2/4.</text>
</comment>
<comment type="subunit">
    <text evidence="1">Heterodimer of LeuC and LeuD.</text>
</comment>
<comment type="similarity">
    <text evidence="1">Belongs to the LeuD family. LeuD type 1 subfamily.</text>
</comment>
<keyword id="KW-0028">Amino-acid biosynthesis</keyword>
<keyword id="KW-0100">Branched-chain amino acid biosynthesis</keyword>
<keyword id="KW-0432">Leucine biosynthesis</keyword>
<keyword id="KW-0456">Lyase</keyword>
<keyword id="KW-1185">Reference proteome</keyword>
<feature type="chain" id="PRO_1000135834" description="3-isopropylmalate dehydratase small subunit">
    <location>
        <begin position="1"/>
        <end position="201"/>
    </location>
</feature>
<organism>
    <name type="scientific">Shewanella woodyi (strain ATCC 51908 / MS32)</name>
    <dbReference type="NCBI Taxonomy" id="392500"/>
    <lineage>
        <taxon>Bacteria</taxon>
        <taxon>Pseudomonadati</taxon>
        <taxon>Pseudomonadota</taxon>
        <taxon>Gammaproteobacteria</taxon>
        <taxon>Alteromonadales</taxon>
        <taxon>Shewanellaceae</taxon>
        <taxon>Shewanella</taxon>
    </lineage>
</organism>
<sequence length="201" mass="21926">MEAFTKHTGLAVMIDSANVDTDQIIPKQFLSKVTRDGFGVHLFHDWRYLDDAGDEPNPEFTLNQSRYKGASILISKENFGCGSSREHAPWALADFGLRAIIAPSFADIFYGNSINNGLLPVRLSDVEVQQLMDEVQANEGAEITVDLEGLTVTSPSGAVFSFEIAGSARHNMLNGLDAIGLTLAYDVQIASYESQLPAWKA</sequence>
<evidence type="ECO:0000255" key="1">
    <source>
        <dbReference type="HAMAP-Rule" id="MF_01031"/>
    </source>
</evidence>
<protein>
    <recommendedName>
        <fullName evidence="1">3-isopropylmalate dehydratase small subunit</fullName>
        <ecNumber evidence="1">4.2.1.33</ecNumber>
    </recommendedName>
    <alternativeName>
        <fullName evidence="1">Alpha-IPM isomerase</fullName>
        <shortName evidence="1">IPMI</shortName>
    </alternativeName>
    <alternativeName>
        <fullName evidence="1">Isopropylmalate isomerase</fullName>
    </alternativeName>
</protein>
<reference key="1">
    <citation type="submission" date="2008-02" db="EMBL/GenBank/DDBJ databases">
        <title>Complete sequence of Shewanella woodyi ATCC 51908.</title>
        <authorList>
            <consortium name="US DOE Joint Genome Institute"/>
            <person name="Copeland A."/>
            <person name="Lucas S."/>
            <person name="Lapidus A."/>
            <person name="Glavina del Rio T."/>
            <person name="Dalin E."/>
            <person name="Tice H."/>
            <person name="Bruce D."/>
            <person name="Goodwin L."/>
            <person name="Pitluck S."/>
            <person name="Sims D."/>
            <person name="Brettin T."/>
            <person name="Detter J.C."/>
            <person name="Han C."/>
            <person name="Kuske C.R."/>
            <person name="Schmutz J."/>
            <person name="Larimer F."/>
            <person name="Land M."/>
            <person name="Hauser L."/>
            <person name="Kyrpides N."/>
            <person name="Lykidis A."/>
            <person name="Zhao J.-S."/>
            <person name="Richardson P."/>
        </authorList>
    </citation>
    <scope>NUCLEOTIDE SEQUENCE [LARGE SCALE GENOMIC DNA]</scope>
    <source>
        <strain>ATCC 51908 / MS32</strain>
    </source>
</reference>